<accession>Q3KLR8</accession>
<feature type="chain" id="PRO_0000234963" description="Serine hydroxymethyltransferase">
    <location>
        <begin position="1"/>
        <end position="497"/>
    </location>
</feature>
<feature type="binding site" evidence="1">
    <location>
        <position position="176"/>
    </location>
    <ligand>
        <name>(6S)-5,6,7,8-tetrahydrofolate</name>
        <dbReference type="ChEBI" id="CHEBI:57453"/>
    </ligand>
</feature>
<feature type="binding site" evidence="1">
    <location>
        <begin position="180"/>
        <end position="182"/>
    </location>
    <ligand>
        <name>(6S)-5,6,7,8-tetrahydrofolate</name>
        <dbReference type="ChEBI" id="CHEBI:57453"/>
    </ligand>
</feature>
<feature type="site" description="Plays an important role in substrate specificity" evidence="1">
    <location>
        <position position="288"/>
    </location>
</feature>
<feature type="modified residue" description="N6-(pyridoxal phosphate)lysine" evidence="1">
    <location>
        <position position="289"/>
    </location>
</feature>
<organism>
    <name type="scientific">Chlamydia trachomatis serovar A (strain ATCC VR-571B / DSM 19440 / HAR-13)</name>
    <dbReference type="NCBI Taxonomy" id="315277"/>
    <lineage>
        <taxon>Bacteria</taxon>
        <taxon>Pseudomonadati</taxon>
        <taxon>Chlamydiota</taxon>
        <taxon>Chlamydiia</taxon>
        <taxon>Chlamydiales</taxon>
        <taxon>Chlamydiaceae</taxon>
        <taxon>Chlamydia/Chlamydophila group</taxon>
        <taxon>Chlamydia</taxon>
    </lineage>
</organism>
<proteinExistence type="inferred from homology"/>
<evidence type="ECO:0000255" key="1">
    <source>
        <dbReference type="HAMAP-Rule" id="MF_00051"/>
    </source>
</evidence>
<gene>
    <name evidence="1" type="primary">glyA</name>
    <name type="ordered locus">CTA_0472</name>
</gene>
<name>GLYA_CHLTA</name>
<sequence length="497" mass="54271">MASLLDRYLRNISDKSQQNLASVAYLASLDHLLHAFPSIGQSIVQELKSQRSRLKMIASENFSSLSVQLAMGNLLTDKYCEGSPFKRFYSCCENVDAIEWECAETAKELFGAESAFVQPHSGADANLLAIMSIITQKIQSPAVQRLGYKTINDLPEQEYEALKAEMAQHKCLGPSLNSGGHLTHGTVRMNIMSKLMHCLPYEVNLDTELFDYDEIAKIAKEHKPTVLIAGYSSYSRRLNFATLKQIAEDCGAVLWVDMAHFAGLVAGGVFVGEENPMPYADIVTTTTHKTLRGPRGGLVLAKKEYANTLNKACPLMMGGPLPHVIAAKAIALKEAMTINFRKYAHKVVENARTLAEVFQRNGLRLLTGGTDNHMLIIDLTSLGVPGRIAEDMLTSVGIAVNRNTIPSDASGQWKTSGIRLGTPALTTLGMGSAEMEEVANIIVKVLRNITVRSNAESGSSKSEGELSEGIAQEARQRVADLLGRFPLYPEIDLETLV</sequence>
<protein>
    <recommendedName>
        <fullName evidence="1">Serine hydroxymethyltransferase</fullName>
        <shortName evidence="1">SHMT</shortName>
        <shortName evidence="1">Serine methylase</shortName>
        <ecNumber evidence="1">2.1.2.1</ecNumber>
    </recommendedName>
</protein>
<reference key="1">
    <citation type="journal article" date="2005" name="Infect. Immun.">
        <title>Comparative genomic analysis of Chlamydia trachomatis oculotropic and genitotropic strains.</title>
        <authorList>
            <person name="Carlson J.H."/>
            <person name="Porcella S.F."/>
            <person name="McClarty G."/>
            <person name="Caldwell H.D."/>
        </authorList>
    </citation>
    <scope>NUCLEOTIDE SEQUENCE [LARGE SCALE GENOMIC DNA]</scope>
    <source>
        <strain>ATCC VR-571B / DSM 19440 / HAR-13</strain>
    </source>
</reference>
<keyword id="KW-0028">Amino-acid biosynthesis</keyword>
<keyword id="KW-0963">Cytoplasm</keyword>
<keyword id="KW-0554">One-carbon metabolism</keyword>
<keyword id="KW-0663">Pyridoxal phosphate</keyword>
<keyword id="KW-0808">Transferase</keyword>
<dbReference type="EC" id="2.1.2.1" evidence="1"/>
<dbReference type="EMBL" id="CP000051">
    <property type="protein sequence ID" value="AAX50704.1"/>
    <property type="molecule type" value="Genomic_DNA"/>
</dbReference>
<dbReference type="RefSeq" id="WP_009871786.1">
    <property type="nucleotide sequence ID" value="NC_007429.1"/>
</dbReference>
<dbReference type="SMR" id="Q3KLR8"/>
<dbReference type="KEGG" id="cta:CTA_0472"/>
<dbReference type="HOGENOM" id="CLU_022477_2_1_0"/>
<dbReference type="UniPathway" id="UPA00193"/>
<dbReference type="UniPathway" id="UPA00288">
    <property type="reaction ID" value="UER01023"/>
</dbReference>
<dbReference type="Proteomes" id="UP000002532">
    <property type="component" value="Chromosome"/>
</dbReference>
<dbReference type="GO" id="GO:0005829">
    <property type="term" value="C:cytosol"/>
    <property type="evidence" value="ECO:0007669"/>
    <property type="project" value="TreeGrafter"/>
</dbReference>
<dbReference type="GO" id="GO:0004372">
    <property type="term" value="F:glycine hydroxymethyltransferase activity"/>
    <property type="evidence" value="ECO:0007669"/>
    <property type="project" value="UniProtKB-UniRule"/>
</dbReference>
<dbReference type="GO" id="GO:0030170">
    <property type="term" value="F:pyridoxal phosphate binding"/>
    <property type="evidence" value="ECO:0007669"/>
    <property type="project" value="UniProtKB-UniRule"/>
</dbReference>
<dbReference type="GO" id="GO:0019264">
    <property type="term" value="P:glycine biosynthetic process from serine"/>
    <property type="evidence" value="ECO:0007669"/>
    <property type="project" value="UniProtKB-UniRule"/>
</dbReference>
<dbReference type="GO" id="GO:0035999">
    <property type="term" value="P:tetrahydrofolate interconversion"/>
    <property type="evidence" value="ECO:0007669"/>
    <property type="project" value="UniProtKB-UniRule"/>
</dbReference>
<dbReference type="CDD" id="cd00378">
    <property type="entry name" value="SHMT"/>
    <property type="match status" value="1"/>
</dbReference>
<dbReference type="FunFam" id="3.40.640.10:FF:000060">
    <property type="entry name" value="Serine hydroxymethyltransferase"/>
    <property type="match status" value="1"/>
</dbReference>
<dbReference type="Gene3D" id="3.90.1150.10">
    <property type="entry name" value="Aspartate Aminotransferase, domain 1"/>
    <property type="match status" value="2"/>
</dbReference>
<dbReference type="Gene3D" id="3.40.640.10">
    <property type="entry name" value="Type I PLP-dependent aspartate aminotransferase-like (Major domain)"/>
    <property type="match status" value="2"/>
</dbReference>
<dbReference type="HAMAP" id="MF_00051">
    <property type="entry name" value="SHMT"/>
    <property type="match status" value="1"/>
</dbReference>
<dbReference type="InterPro" id="IPR015424">
    <property type="entry name" value="PyrdxlP-dep_Trfase"/>
</dbReference>
<dbReference type="InterPro" id="IPR015421">
    <property type="entry name" value="PyrdxlP-dep_Trfase_major"/>
</dbReference>
<dbReference type="InterPro" id="IPR015422">
    <property type="entry name" value="PyrdxlP-dep_Trfase_small"/>
</dbReference>
<dbReference type="InterPro" id="IPR001085">
    <property type="entry name" value="Ser_HO-MeTrfase"/>
</dbReference>
<dbReference type="InterPro" id="IPR049943">
    <property type="entry name" value="Ser_HO-MeTrfase-like"/>
</dbReference>
<dbReference type="InterPro" id="IPR019798">
    <property type="entry name" value="Ser_HO-MeTrfase_PLP_BS"/>
</dbReference>
<dbReference type="InterPro" id="IPR039429">
    <property type="entry name" value="SHMT-like_dom"/>
</dbReference>
<dbReference type="NCBIfam" id="NF000586">
    <property type="entry name" value="PRK00011.1"/>
    <property type="match status" value="1"/>
</dbReference>
<dbReference type="NCBIfam" id="NF010094">
    <property type="entry name" value="PRK13580.1"/>
    <property type="match status" value="1"/>
</dbReference>
<dbReference type="PANTHER" id="PTHR11680">
    <property type="entry name" value="SERINE HYDROXYMETHYLTRANSFERASE"/>
    <property type="match status" value="1"/>
</dbReference>
<dbReference type="PANTHER" id="PTHR11680:SF35">
    <property type="entry name" value="SERINE HYDROXYMETHYLTRANSFERASE 1"/>
    <property type="match status" value="1"/>
</dbReference>
<dbReference type="Pfam" id="PF00464">
    <property type="entry name" value="SHMT"/>
    <property type="match status" value="2"/>
</dbReference>
<dbReference type="PIRSF" id="PIRSF000412">
    <property type="entry name" value="SHMT"/>
    <property type="match status" value="1"/>
</dbReference>
<dbReference type="SUPFAM" id="SSF53383">
    <property type="entry name" value="PLP-dependent transferases"/>
    <property type="match status" value="1"/>
</dbReference>
<dbReference type="PROSITE" id="PS00096">
    <property type="entry name" value="SHMT"/>
    <property type="match status" value="1"/>
</dbReference>
<comment type="function">
    <text evidence="1">Catalyzes the reversible interconversion of serine and glycine with tetrahydrofolate (THF) serving as the one-carbon carrier. This reaction serves as the major source of one-carbon groups required for the biosynthesis of purines, thymidylate, methionine, and other important biomolecules. Also exhibits THF-independent aldolase activity toward beta-hydroxyamino acids, producing glycine and aldehydes, via a retro-aldol mechanism.</text>
</comment>
<comment type="catalytic activity">
    <reaction evidence="1">
        <text>(6R)-5,10-methylene-5,6,7,8-tetrahydrofolate + glycine + H2O = (6S)-5,6,7,8-tetrahydrofolate + L-serine</text>
        <dbReference type="Rhea" id="RHEA:15481"/>
        <dbReference type="ChEBI" id="CHEBI:15377"/>
        <dbReference type="ChEBI" id="CHEBI:15636"/>
        <dbReference type="ChEBI" id="CHEBI:33384"/>
        <dbReference type="ChEBI" id="CHEBI:57305"/>
        <dbReference type="ChEBI" id="CHEBI:57453"/>
        <dbReference type="EC" id="2.1.2.1"/>
    </reaction>
</comment>
<comment type="cofactor">
    <cofactor evidence="1">
        <name>pyridoxal 5'-phosphate</name>
        <dbReference type="ChEBI" id="CHEBI:597326"/>
    </cofactor>
</comment>
<comment type="pathway">
    <text evidence="1">One-carbon metabolism; tetrahydrofolate interconversion.</text>
</comment>
<comment type="pathway">
    <text evidence="1">Amino-acid biosynthesis; glycine biosynthesis; glycine from L-serine: step 1/1.</text>
</comment>
<comment type="subunit">
    <text evidence="1">Homodimer.</text>
</comment>
<comment type="subcellular location">
    <subcellularLocation>
        <location evidence="1">Cytoplasm</location>
    </subcellularLocation>
</comment>
<comment type="similarity">
    <text evidence="1">Belongs to the SHMT family.</text>
</comment>